<reference key="1">
    <citation type="journal article" date="2007" name="J. Bacteriol.">
        <title>The genome sequence of avian pathogenic Escherichia coli strain O1:K1:H7 shares strong similarities with human extraintestinal pathogenic E. coli genomes.</title>
        <authorList>
            <person name="Johnson T.J."/>
            <person name="Kariyawasam S."/>
            <person name="Wannemuehler Y."/>
            <person name="Mangiamele P."/>
            <person name="Johnson S.J."/>
            <person name="Doetkott C."/>
            <person name="Skyberg J.A."/>
            <person name="Lynne A.M."/>
            <person name="Johnson J.R."/>
            <person name="Nolan L.K."/>
        </authorList>
    </citation>
    <scope>NUCLEOTIDE SEQUENCE [LARGE SCALE GENOMIC DNA]</scope>
</reference>
<sequence>MSTPDNRSVNFFSLFRRGQHYSKTWPLEKRLAPVFVENRVIKMTCYAIRFMPPIAVFTLCWQIALGGQLGPAVATALFALSLPMQGLWWLGKRSVTPLPPAILNWFYDVRGKLQESGQVLAPVEGKPDYQALADTLKRAFKQLDKTFLDDL</sequence>
<protein>
    <recommendedName>
        <fullName evidence="1">UPF0208 membrane protein YfbV</fullName>
    </recommendedName>
</protein>
<dbReference type="EMBL" id="CP000468">
    <property type="protein sequence ID" value="ABJ01684.1"/>
    <property type="molecule type" value="Genomic_DNA"/>
</dbReference>
<dbReference type="RefSeq" id="WP_000106620.1">
    <property type="nucleotide sequence ID" value="NZ_CADILS010000025.1"/>
</dbReference>
<dbReference type="KEGG" id="ecv:APECO1_4269"/>
<dbReference type="HOGENOM" id="CLU_128746_0_0_6"/>
<dbReference type="Proteomes" id="UP000008216">
    <property type="component" value="Chromosome"/>
</dbReference>
<dbReference type="GO" id="GO:0005886">
    <property type="term" value="C:plasma membrane"/>
    <property type="evidence" value="ECO:0007669"/>
    <property type="project" value="UniProtKB-SubCell"/>
</dbReference>
<dbReference type="HAMAP" id="MF_01101">
    <property type="entry name" value="UPF0208"/>
    <property type="match status" value="1"/>
</dbReference>
<dbReference type="InterPro" id="IPR007334">
    <property type="entry name" value="UPF0208"/>
</dbReference>
<dbReference type="NCBIfam" id="NF002493">
    <property type="entry name" value="PRK01816.1"/>
    <property type="match status" value="1"/>
</dbReference>
<dbReference type="Pfam" id="PF04217">
    <property type="entry name" value="DUF412"/>
    <property type="match status" value="1"/>
</dbReference>
<evidence type="ECO:0000255" key="1">
    <source>
        <dbReference type="HAMAP-Rule" id="MF_01101"/>
    </source>
</evidence>
<gene>
    <name evidence="1" type="primary">yfbV</name>
    <name type="ordered locus">Ecok1_21900</name>
    <name type="ORF">APECO1_4269</name>
</gene>
<feature type="chain" id="PRO_1000064969" description="UPF0208 membrane protein YfbV">
    <location>
        <begin position="1"/>
        <end position="151"/>
    </location>
</feature>
<feature type="transmembrane region" description="Helical" evidence="1">
    <location>
        <begin position="46"/>
        <end position="65"/>
    </location>
</feature>
<feature type="transmembrane region" description="Helical" evidence="1">
    <location>
        <begin position="69"/>
        <end position="91"/>
    </location>
</feature>
<comment type="subcellular location">
    <subcellularLocation>
        <location evidence="1">Cell inner membrane</location>
        <topology evidence="1">Multi-pass membrane protein</topology>
    </subcellularLocation>
</comment>
<comment type="similarity">
    <text evidence="1">Belongs to the UPF0208 family.</text>
</comment>
<name>YFBV_ECOK1</name>
<accession>A1ADE4</accession>
<keyword id="KW-0997">Cell inner membrane</keyword>
<keyword id="KW-1003">Cell membrane</keyword>
<keyword id="KW-0472">Membrane</keyword>
<keyword id="KW-1185">Reference proteome</keyword>
<keyword id="KW-0812">Transmembrane</keyword>
<keyword id="KW-1133">Transmembrane helix</keyword>
<organism>
    <name type="scientific">Escherichia coli O1:K1 / APEC</name>
    <dbReference type="NCBI Taxonomy" id="405955"/>
    <lineage>
        <taxon>Bacteria</taxon>
        <taxon>Pseudomonadati</taxon>
        <taxon>Pseudomonadota</taxon>
        <taxon>Gammaproteobacteria</taxon>
        <taxon>Enterobacterales</taxon>
        <taxon>Enterobacteriaceae</taxon>
        <taxon>Escherichia</taxon>
    </lineage>
</organism>
<proteinExistence type="inferred from homology"/>